<accession>P80226</accession>
<accession>Q90WB0</accession>
<sequence>MAFSGTWQVYAQENYEEFLKALALPEDLIKMARDIKPIVEIQQKGDDFVVTSKTPRQTVTNSFTLGKEADITTMDGKKLKCTVHLANGKLVTKSEKFSHEQEVKGNEMVETITFGGVTLIRRSKRV</sequence>
<name>FABPL_CHICK</name>
<reference key="1">
    <citation type="submission" date="2001-05" db="EMBL/GenBank/DDBJ databases">
        <title>Regulation of gene expression of two liver type fatty acid binding proteins in chicken.</title>
        <authorList>
            <person name="Murai A."/>
            <person name="Kusumoto K."/>
            <person name="Okumura J."/>
        </authorList>
    </citation>
    <scope>NUCLEOTIDE SEQUENCE [MRNA]</scope>
    <source>
        <strain>White leghorn</strain>
        <tissue>Liver</tissue>
    </source>
</reference>
<reference key="2">
    <citation type="journal article" date="1994" name="Comp. Biochem. Physiol.">
        <title>The primary structure of a basic (pI 9.0) fatty acid-binding protein from liver of Gallus domesticus.</title>
        <authorList>
            <person name="Ceciliani F."/>
            <person name="Monaco H.L."/>
            <person name="Ronchi S."/>
            <person name="Faotto L."/>
            <person name="Spadon P."/>
        </authorList>
    </citation>
    <scope>PROTEIN SEQUENCE OF 2-126</scope>
    <scope>ACETYLATION AT ALA-2</scope>
    <source>
        <tissue>Liver</tissue>
    </source>
</reference>
<reference key="3">
    <citation type="journal article" date="1990" name="Mol. Cell. Biochem.">
        <title>Crystal structure of chicken liver basic fatty acid-binding protein at 2.7 A resolution.</title>
        <authorList>
            <person name="Scapin G."/>
            <person name="Spadon P."/>
            <person name="Mammi M."/>
            <person name="Zanotti G."/>
            <person name="Monaco H.L."/>
        </authorList>
    </citation>
    <scope>X-RAY CRYSTALLOGRAPHY (2.7 ANGSTROMS)</scope>
</reference>
<reference key="4">
    <citation type="journal article" date="2003" name="J. Biomol. NMR">
        <title>Solution structure of chicken liver basic fatty acid binding protein.</title>
        <authorList>
            <person name="Vasile F."/>
            <person name="Ragona L."/>
            <person name="Catalano M."/>
            <person name="Zetta L."/>
            <person name="Perduca M."/>
            <person name="Monaco H.L."/>
            <person name="Molinari H."/>
        </authorList>
    </citation>
    <scope>STRUCTURE BY NMR</scope>
</reference>
<reference key="5">
    <citation type="journal article" date="2004" name="Biochemistry">
        <title>Crystal structure of chicken liver basic fatty acid-binding protein complexed with cholic acid.</title>
        <authorList>
            <person name="Nichesola D."/>
            <person name="Perduca M."/>
            <person name="Capaldi S."/>
            <person name="Carrizo M.E."/>
            <person name="Righetti P.G."/>
            <person name="Monaco H.L."/>
        </authorList>
    </citation>
    <scope>X-RAY CRYSTALLOGRAPHY (2.0 ANGSTROMS) IN COMPLEX WITH CHOLATE</scope>
</reference>
<reference key="6">
    <citation type="journal article" date="2006" name="J. Biol. Chem.">
        <title>NMR dynamic studies suggest that allosteric activation regulates ligand binding in chicken liver bile acid-binding protein.</title>
        <authorList>
            <person name="Ragona L."/>
            <person name="Catalano M."/>
            <person name="Luppi M."/>
            <person name="Cicero D."/>
            <person name="Eliseo T."/>
            <person name="Foote J."/>
            <person name="Fogolari F."/>
            <person name="Zetta L."/>
            <person name="Molinari H."/>
        </authorList>
    </citation>
    <scope>STRUCTURE BY NMR</scope>
</reference>
<keyword id="KW-0002">3D-structure</keyword>
<keyword id="KW-0007">Acetylation</keyword>
<keyword id="KW-0963">Cytoplasm</keyword>
<keyword id="KW-0903">Direct protein sequencing</keyword>
<keyword id="KW-0446">Lipid-binding</keyword>
<keyword id="KW-1185">Reference proteome</keyword>
<keyword id="KW-0813">Transport</keyword>
<dbReference type="EMBL" id="AF380998">
    <property type="protein sequence ID" value="AAK58094.1"/>
    <property type="molecule type" value="mRNA"/>
</dbReference>
<dbReference type="PDB" id="1MVG">
    <property type="method" value="NMR"/>
    <property type="chains" value="A=2-126"/>
</dbReference>
<dbReference type="PDB" id="1TVQ">
    <property type="method" value="X-ray"/>
    <property type="resolution" value="2.00 A"/>
    <property type="chains" value="A=2-126"/>
</dbReference>
<dbReference type="PDB" id="1TW4">
    <property type="method" value="X-ray"/>
    <property type="resolution" value="2.00 A"/>
    <property type="chains" value="A/B=2-126"/>
</dbReference>
<dbReference type="PDB" id="1ZRY">
    <property type="method" value="NMR"/>
    <property type="chains" value="A=2-126"/>
</dbReference>
<dbReference type="PDB" id="2JN3">
    <property type="method" value="NMR"/>
    <property type="chains" value="A=2-126"/>
</dbReference>
<dbReference type="PDB" id="2K62">
    <property type="method" value="NMR"/>
    <property type="chains" value="A=2-126"/>
</dbReference>
<dbReference type="PDB" id="2LFO">
    <property type="method" value="NMR"/>
    <property type="chains" value="A=2-126"/>
</dbReference>
<dbReference type="PDB" id="7O0J">
    <property type="method" value="X-ray"/>
    <property type="resolution" value="1.40 A"/>
    <property type="chains" value="A=1-126"/>
</dbReference>
<dbReference type="PDB" id="7O0K">
    <property type="method" value="X-ray"/>
    <property type="resolution" value="1.83 A"/>
    <property type="chains" value="A/B=1-126"/>
</dbReference>
<dbReference type="PDB" id="9ETC">
    <property type="method" value="X-ray"/>
    <property type="resolution" value="1.65 A"/>
    <property type="chains" value="A/B=1-126"/>
</dbReference>
<dbReference type="PDB" id="9ETD">
    <property type="method" value="X-ray"/>
    <property type="resolution" value="2.30 A"/>
    <property type="chains" value="A/B=1-126"/>
</dbReference>
<dbReference type="PDB" id="9ETE">
    <property type="method" value="X-ray"/>
    <property type="resolution" value="2.10 A"/>
    <property type="chains" value="A/B=1-126"/>
</dbReference>
<dbReference type="PDB" id="9ETF">
    <property type="method" value="X-ray"/>
    <property type="resolution" value="2.20 A"/>
    <property type="chains" value="A/B=1-126"/>
</dbReference>
<dbReference type="PDB" id="9ETG">
    <property type="method" value="X-ray"/>
    <property type="resolution" value="2.00 A"/>
    <property type="chains" value="A/B/C=1-126"/>
</dbReference>
<dbReference type="PDBsum" id="1MVG"/>
<dbReference type="PDBsum" id="1TVQ"/>
<dbReference type="PDBsum" id="1TW4"/>
<dbReference type="PDBsum" id="1ZRY"/>
<dbReference type="PDBsum" id="2JN3"/>
<dbReference type="PDBsum" id="2K62"/>
<dbReference type="PDBsum" id="2LFO"/>
<dbReference type="PDBsum" id="7O0J"/>
<dbReference type="PDBsum" id="7O0K"/>
<dbReference type="PDBsum" id="9ETC"/>
<dbReference type="PDBsum" id="9ETD"/>
<dbReference type="PDBsum" id="9ETE"/>
<dbReference type="PDBsum" id="9ETF"/>
<dbReference type="PDBsum" id="9ETG"/>
<dbReference type="BMRB" id="P80226"/>
<dbReference type="SMR" id="P80226"/>
<dbReference type="FunCoup" id="P80226">
    <property type="interactions" value="1195"/>
</dbReference>
<dbReference type="STRING" id="9031.ENSGALP00000006574"/>
<dbReference type="iPTMnet" id="P80226"/>
<dbReference type="PaxDb" id="9031-ENSGALP00000006574"/>
<dbReference type="KEGG" id="gga:395345"/>
<dbReference type="CTD" id="395345"/>
<dbReference type="VEuPathDB" id="HostDB:geneid_395345"/>
<dbReference type="eggNOG" id="KOG4015">
    <property type="taxonomic scope" value="Eukaryota"/>
</dbReference>
<dbReference type="HOGENOM" id="CLU_113772_4_1_1"/>
<dbReference type="InParanoid" id="P80226"/>
<dbReference type="OrthoDB" id="8501868at2759"/>
<dbReference type="PhylomeDB" id="P80226"/>
<dbReference type="TreeFam" id="TF330348"/>
<dbReference type="EvolutionaryTrace" id="P80226"/>
<dbReference type="PRO" id="PR:P80226"/>
<dbReference type="Proteomes" id="UP000000539">
    <property type="component" value="Unassembled WGS sequence"/>
</dbReference>
<dbReference type="GO" id="GO:0005829">
    <property type="term" value="C:cytosol"/>
    <property type="evidence" value="ECO:0000318"/>
    <property type="project" value="GO_Central"/>
</dbReference>
<dbReference type="GO" id="GO:0005634">
    <property type="term" value="C:nucleus"/>
    <property type="evidence" value="ECO:0000318"/>
    <property type="project" value="GO_Central"/>
</dbReference>
<dbReference type="GO" id="GO:0005504">
    <property type="term" value="F:fatty acid binding"/>
    <property type="evidence" value="ECO:0000318"/>
    <property type="project" value="GO_Central"/>
</dbReference>
<dbReference type="GO" id="GO:0015908">
    <property type="term" value="P:fatty acid transport"/>
    <property type="evidence" value="ECO:0000318"/>
    <property type="project" value="GO_Central"/>
</dbReference>
<dbReference type="CDD" id="cd19447">
    <property type="entry name" value="L-BABP-like"/>
    <property type="match status" value="1"/>
</dbReference>
<dbReference type="FunFam" id="2.40.128.20:FF:000006">
    <property type="entry name" value="Fatty acid-binding protein, liver"/>
    <property type="match status" value="1"/>
</dbReference>
<dbReference type="Gene3D" id="2.40.128.20">
    <property type="match status" value="1"/>
</dbReference>
<dbReference type="InterPro" id="IPR012674">
    <property type="entry name" value="Calycin"/>
</dbReference>
<dbReference type="InterPro" id="IPR000463">
    <property type="entry name" value="Fatty_acid-bd"/>
</dbReference>
<dbReference type="InterPro" id="IPR031259">
    <property type="entry name" value="ILBP"/>
</dbReference>
<dbReference type="PANTHER" id="PTHR11955">
    <property type="entry name" value="FATTY ACID BINDING PROTEIN"/>
    <property type="match status" value="1"/>
</dbReference>
<dbReference type="Pfam" id="PF14651">
    <property type="entry name" value="Lipocalin_7"/>
    <property type="match status" value="1"/>
</dbReference>
<dbReference type="PRINTS" id="PR00178">
    <property type="entry name" value="FATTYACIDBP"/>
</dbReference>
<dbReference type="SUPFAM" id="SSF50814">
    <property type="entry name" value="Lipocalins"/>
    <property type="match status" value="1"/>
</dbReference>
<dbReference type="PROSITE" id="PS00214">
    <property type="entry name" value="FABP"/>
    <property type="match status" value="1"/>
</dbReference>
<gene>
    <name type="primary">FABP1</name>
</gene>
<feature type="initiator methionine" description="Removed" evidence="2">
    <location>
        <position position="1"/>
    </location>
</feature>
<feature type="chain" id="PRO_0000067338" description="Fatty acid-binding protein, liver">
    <location>
        <begin position="2"/>
        <end position="126"/>
    </location>
</feature>
<feature type="binding site" evidence="1">
    <location>
        <position position="56"/>
    </location>
    <ligand>
        <name>cholate</name>
        <dbReference type="ChEBI" id="CHEBI:29747"/>
        <label>1</label>
    </ligand>
</feature>
<feature type="binding site" evidence="1">
    <location>
        <position position="57"/>
    </location>
    <ligand>
        <name>cholate</name>
        <dbReference type="ChEBI" id="CHEBI:29747"/>
        <label>1</label>
    </ligand>
</feature>
<feature type="binding site" evidence="1">
    <location>
        <position position="77"/>
    </location>
    <ligand>
        <name>cholate</name>
        <dbReference type="ChEBI" id="CHEBI:29747"/>
        <label>2</label>
    </ligand>
</feature>
<feature type="binding site" evidence="1">
    <location>
        <position position="99"/>
    </location>
    <ligand>
        <name>cholate</name>
        <dbReference type="ChEBI" id="CHEBI:29747"/>
        <label>2</label>
    </ligand>
</feature>
<feature type="binding site" evidence="1">
    <location>
        <position position="101"/>
    </location>
    <ligand>
        <name>cholate</name>
        <dbReference type="ChEBI" id="CHEBI:29747"/>
        <label>2</label>
    </ligand>
</feature>
<feature type="modified residue" description="N-acetylalanine" evidence="2">
    <location>
        <position position="2"/>
    </location>
</feature>
<feature type="sequence conflict" description="In Ref. 1; AAK58094." evidence="3" ref="1">
    <original>T</original>
    <variation>C</variation>
    <location>
        <position position="92"/>
    </location>
</feature>
<feature type="strand" evidence="5">
    <location>
        <begin position="5"/>
        <end position="14"/>
    </location>
</feature>
<feature type="helix" evidence="5">
    <location>
        <begin position="15"/>
        <end position="21"/>
    </location>
</feature>
<feature type="strand" evidence="4">
    <location>
        <begin position="22"/>
        <end position="24"/>
    </location>
</feature>
<feature type="helix" evidence="5">
    <location>
        <begin position="26"/>
        <end position="32"/>
    </location>
</feature>
<feature type="strand" evidence="5">
    <location>
        <begin position="38"/>
        <end position="44"/>
    </location>
</feature>
<feature type="strand" evidence="5">
    <location>
        <begin position="47"/>
        <end position="53"/>
    </location>
</feature>
<feature type="strand" evidence="5">
    <location>
        <begin position="58"/>
        <end position="64"/>
    </location>
</feature>
<feature type="strand" evidence="5">
    <location>
        <begin position="69"/>
        <end position="72"/>
    </location>
</feature>
<feature type="turn" evidence="4">
    <location>
        <begin position="74"/>
        <end position="76"/>
    </location>
</feature>
<feature type="strand" evidence="5">
    <location>
        <begin position="78"/>
        <end position="86"/>
    </location>
</feature>
<feature type="strand" evidence="5">
    <location>
        <begin position="89"/>
        <end position="93"/>
    </location>
</feature>
<feature type="strand" evidence="5">
    <location>
        <begin position="95"/>
        <end position="104"/>
    </location>
</feature>
<feature type="strand" evidence="5">
    <location>
        <begin position="107"/>
        <end position="114"/>
    </location>
</feature>
<feature type="strand" evidence="5">
    <location>
        <begin position="117"/>
        <end position="125"/>
    </location>
</feature>
<proteinExistence type="evidence at protein level"/>
<organism>
    <name type="scientific">Gallus gallus</name>
    <name type="common">Chicken</name>
    <dbReference type="NCBI Taxonomy" id="9031"/>
    <lineage>
        <taxon>Eukaryota</taxon>
        <taxon>Metazoa</taxon>
        <taxon>Chordata</taxon>
        <taxon>Craniata</taxon>
        <taxon>Vertebrata</taxon>
        <taxon>Euteleostomi</taxon>
        <taxon>Archelosauria</taxon>
        <taxon>Archosauria</taxon>
        <taxon>Dinosauria</taxon>
        <taxon>Saurischia</taxon>
        <taxon>Theropoda</taxon>
        <taxon>Coelurosauria</taxon>
        <taxon>Aves</taxon>
        <taxon>Neognathae</taxon>
        <taxon>Galloanserae</taxon>
        <taxon>Galliformes</taxon>
        <taxon>Phasianidae</taxon>
        <taxon>Phasianinae</taxon>
        <taxon>Gallus</taxon>
    </lineage>
</organism>
<protein>
    <recommendedName>
        <fullName>Fatty acid-binding protein, liver</fullName>
    </recommendedName>
    <alternativeName>
        <fullName>Fatty acid-binding protein 1</fullName>
    </alternativeName>
    <alternativeName>
        <fullName>Liver basic FABP</fullName>
        <shortName>LB-FABP</shortName>
    </alternativeName>
    <alternativeName>
        <fullName>Liver bile acid-binding protein</fullName>
        <shortName>L-BABP</shortName>
    </alternativeName>
    <alternativeName>
        <fullName>Liver-type fatty acid-binding protein</fullName>
        <shortName>L-FABP</shortName>
    </alternativeName>
</protein>
<evidence type="ECO:0000269" key="1">
    <source>
    </source>
</evidence>
<evidence type="ECO:0000269" key="2">
    <source>
    </source>
</evidence>
<evidence type="ECO:0000305" key="3"/>
<evidence type="ECO:0007829" key="4">
    <source>
        <dbReference type="PDB" id="1MVG"/>
    </source>
</evidence>
<evidence type="ECO:0007829" key="5">
    <source>
        <dbReference type="PDB" id="7O0J"/>
    </source>
</evidence>
<comment type="function">
    <text>Binds free fatty acids and their coenzyme A derivatives, bilirubin, and some other small molecules in the cytoplasm. May be involved in intracellular lipid transport. Binds 2 molecules of cholate per subunit.</text>
</comment>
<comment type="subcellular location">
    <subcellularLocation>
        <location>Cytoplasm</location>
    </subcellularLocation>
</comment>
<comment type="domain">
    <text>Forms a beta-barrel structure that accommodates hydrophobic ligands in its interior.</text>
</comment>
<comment type="similarity">
    <text evidence="3">Belongs to the calycin superfamily. Fatty-acid binding protein (FABP) family.</text>
</comment>